<comment type="similarity">
    <text evidence="1">Belongs to the bacterial ribosomal protein bS21 family.</text>
</comment>
<keyword id="KW-1185">Reference proteome</keyword>
<keyword id="KW-0687">Ribonucleoprotein</keyword>
<keyword id="KW-0689">Ribosomal protein</keyword>
<protein>
    <recommendedName>
        <fullName evidence="1">Small ribosomal subunit protein bS21</fullName>
    </recommendedName>
    <alternativeName>
        <fullName evidence="2">30S ribosomal protein S21</fullName>
    </alternativeName>
</protein>
<organism>
    <name type="scientific">Vesicomyosocius okutanii subsp. Calyptogena okutanii (strain HA)</name>
    <dbReference type="NCBI Taxonomy" id="412965"/>
    <lineage>
        <taxon>Bacteria</taxon>
        <taxon>Pseudomonadati</taxon>
        <taxon>Pseudomonadota</taxon>
        <taxon>Gammaproteobacteria</taxon>
        <taxon>Candidatus Pseudothioglobaceae</taxon>
        <taxon>Candidatus Vesicomyosocius</taxon>
    </lineage>
</organism>
<evidence type="ECO:0000255" key="1">
    <source>
        <dbReference type="HAMAP-Rule" id="MF_00358"/>
    </source>
</evidence>
<evidence type="ECO:0000305" key="2"/>
<sequence>MPSIKVRENEPFDIALRRFRRICDRAGVITDVRKKEFFEKPTWVSKRMKAAAVKRTHKEMAKNRVYRKRMY</sequence>
<gene>
    <name evidence="1" type="primary">rpsU</name>
    <name type="ordered locus">COSY_0196</name>
</gene>
<name>RS21_VESOH</name>
<proteinExistence type="inferred from homology"/>
<reference key="1">
    <citation type="journal article" date="2007" name="Curr. Biol.">
        <title>Reduced genome of the thioautotrophic intracellular symbiont in a deep-sea clam, Calyptogena okutanii.</title>
        <authorList>
            <person name="Kuwahara H."/>
            <person name="Yoshida T."/>
            <person name="Takaki Y."/>
            <person name="Shimamura S."/>
            <person name="Nishi S."/>
            <person name="Harada M."/>
            <person name="Matsuyama K."/>
            <person name="Takishita K."/>
            <person name="Kawato M."/>
            <person name="Uematsu K."/>
            <person name="Fujiwara Y."/>
            <person name="Sato T."/>
            <person name="Kato C."/>
            <person name="Kitagawa M."/>
            <person name="Kato I."/>
            <person name="Maruyama T."/>
        </authorList>
    </citation>
    <scope>NUCLEOTIDE SEQUENCE [LARGE SCALE GENOMIC DNA]</scope>
    <source>
        <strain>HA</strain>
    </source>
</reference>
<accession>A5CXJ1</accession>
<dbReference type="EMBL" id="AP009247">
    <property type="protein sequence ID" value="BAF61326.1"/>
    <property type="molecule type" value="Genomic_DNA"/>
</dbReference>
<dbReference type="RefSeq" id="WP_011929596.1">
    <property type="nucleotide sequence ID" value="NC_009465.1"/>
</dbReference>
<dbReference type="SMR" id="A5CXJ1"/>
<dbReference type="STRING" id="412965.COSY_0196"/>
<dbReference type="KEGG" id="vok:COSY_0196"/>
<dbReference type="eggNOG" id="COG0828">
    <property type="taxonomic scope" value="Bacteria"/>
</dbReference>
<dbReference type="HOGENOM" id="CLU_159258_1_0_6"/>
<dbReference type="OrthoDB" id="9799244at2"/>
<dbReference type="Proteomes" id="UP000000247">
    <property type="component" value="Chromosome"/>
</dbReference>
<dbReference type="GO" id="GO:1990904">
    <property type="term" value="C:ribonucleoprotein complex"/>
    <property type="evidence" value="ECO:0007669"/>
    <property type="project" value="UniProtKB-KW"/>
</dbReference>
<dbReference type="GO" id="GO:0005840">
    <property type="term" value="C:ribosome"/>
    <property type="evidence" value="ECO:0007669"/>
    <property type="project" value="UniProtKB-KW"/>
</dbReference>
<dbReference type="GO" id="GO:0003735">
    <property type="term" value="F:structural constituent of ribosome"/>
    <property type="evidence" value="ECO:0007669"/>
    <property type="project" value="InterPro"/>
</dbReference>
<dbReference type="GO" id="GO:0006412">
    <property type="term" value="P:translation"/>
    <property type="evidence" value="ECO:0007669"/>
    <property type="project" value="UniProtKB-UniRule"/>
</dbReference>
<dbReference type="Gene3D" id="1.20.5.1150">
    <property type="entry name" value="Ribosomal protein S8"/>
    <property type="match status" value="1"/>
</dbReference>
<dbReference type="HAMAP" id="MF_00358">
    <property type="entry name" value="Ribosomal_bS21"/>
    <property type="match status" value="1"/>
</dbReference>
<dbReference type="InterPro" id="IPR001911">
    <property type="entry name" value="Ribosomal_bS21"/>
</dbReference>
<dbReference type="InterPro" id="IPR038380">
    <property type="entry name" value="Ribosomal_bS21_sf"/>
</dbReference>
<dbReference type="NCBIfam" id="TIGR00030">
    <property type="entry name" value="S21p"/>
    <property type="match status" value="1"/>
</dbReference>
<dbReference type="PANTHER" id="PTHR21109">
    <property type="entry name" value="MITOCHONDRIAL 28S RIBOSOMAL PROTEIN S21"/>
    <property type="match status" value="1"/>
</dbReference>
<dbReference type="PANTHER" id="PTHR21109:SF22">
    <property type="entry name" value="SMALL RIBOSOMAL SUBUNIT PROTEIN BS21"/>
    <property type="match status" value="1"/>
</dbReference>
<dbReference type="Pfam" id="PF01165">
    <property type="entry name" value="Ribosomal_S21"/>
    <property type="match status" value="1"/>
</dbReference>
<dbReference type="PRINTS" id="PR00976">
    <property type="entry name" value="RIBOSOMALS21"/>
</dbReference>
<feature type="chain" id="PRO_1000005185" description="Small ribosomal subunit protein bS21">
    <location>
        <begin position="1"/>
        <end position="71"/>
    </location>
</feature>